<protein>
    <recommendedName>
        <fullName evidence="1">Putative double-stranded DNA mimic protein YciU</fullName>
    </recommendedName>
</protein>
<name>YCIU_ECOLI</name>
<organism>
    <name type="scientific">Escherichia coli (strain K12)</name>
    <dbReference type="NCBI Taxonomy" id="83333"/>
    <lineage>
        <taxon>Bacteria</taxon>
        <taxon>Pseudomonadati</taxon>
        <taxon>Pseudomonadota</taxon>
        <taxon>Gammaproteobacteria</taxon>
        <taxon>Enterobacterales</taxon>
        <taxon>Enterobacteriaceae</taxon>
        <taxon>Escherichia</taxon>
    </lineage>
</organism>
<dbReference type="EMBL" id="U00096">
    <property type="protein sequence ID" value="AAC74330.2"/>
    <property type="molecule type" value="Genomic_DNA"/>
</dbReference>
<dbReference type="EMBL" id="AP009048">
    <property type="protein sequence ID" value="BAA14780.1"/>
    <property type="molecule type" value="Genomic_DNA"/>
</dbReference>
<dbReference type="PIR" id="C64872">
    <property type="entry name" value="C64872"/>
</dbReference>
<dbReference type="RefSeq" id="NP_415764.4">
    <property type="nucleotide sequence ID" value="NC_000913.3"/>
</dbReference>
<dbReference type="RefSeq" id="WP_000366959.1">
    <property type="nucleotide sequence ID" value="NZ_STEB01000005.1"/>
</dbReference>
<dbReference type="SMR" id="P0A8L7"/>
<dbReference type="BioGRID" id="4261977">
    <property type="interactions" value="66"/>
</dbReference>
<dbReference type="BioGRID" id="850186">
    <property type="interactions" value="2"/>
</dbReference>
<dbReference type="DIP" id="DIP-47882N"/>
<dbReference type="FunCoup" id="P0A8L7">
    <property type="interactions" value="119"/>
</dbReference>
<dbReference type="IntAct" id="P0A8L7">
    <property type="interactions" value="8"/>
</dbReference>
<dbReference type="STRING" id="511145.b1248"/>
<dbReference type="jPOST" id="P0A8L7"/>
<dbReference type="PaxDb" id="511145-b1248"/>
<dbReference type="EnsemblBacteria" id="AAC74330">
    <property type="protein sequence ID" value="AAC74330"/>
    <property type="gene ID" value="b1248"/>
</dbReference>
<dbReference type="GeneID" id="945819"/>
<dbReference type="KEGG" id="ecj:JW1240"/>
<dbReference type="KEGG" id="eco:b1248"/>
<dbReference type="KEGG" id="ecoc:C3026_07330"/>
<dbReference type="PATRIC" id="fig|511145.12.peg.1298"/>
<dbReference type="EchoBASE" id="EB4004"/>
<dbReference type="eggNOG" id="COG3099">
    <property type="taxonomic scope" value="Bacteria"/>
</dbReference>
<dbReference type="HOGENOM" id="CLU_143392_0_0_6"/>
<dbReference type="InParanoid" id="P0A8L7"/>
<dbReference type="OMA" id="SEDWQEH"/>
<dbReference type="OrthoDB" id="5677388at2"/>
<dbReference type="PhylomeDB" id="P0A8L7"/>
<dbReference type="BioCyc" id="EcoCyc:G6633-MONOMER"/>
<dbReference type="PRO" id="PR:P0A8L7"/>
<dbReference type="Proteomes" id="UP000000625">
    <property type="component" value="Chromosome"/>
</dbReference>
<dbReference type="Gene3D" id="3.10.450.140">
    <property type="entry name" value="dsDNA mimic, putative"/>
    <property type="match status" value="1"/>
</dbReference>
<dbReference type="HAMAP" id="MF_00680">
    <property type="entry name" value="Put_dsDNA_mimic"/>
    <property type="match status" value="1"/>
</dbReference>
<dbReference type="InterPro" id="IPR007376">
    <property type="entry name" value="dsDNA_mimic_put"/>
</dbReference>
<dbReference type="InterPro" id="IPR036763">
    <property type="entry name" value="Put_dsDNA_mimic_sf"/>
</dbReference>
<dbReference type="NCBIfam" id="NF003469">
    <property type="entry name" value="PRK05094.1"/>
    <property type="match status" value="1"/>
</dbReference>
<dbReference type="Pfam" id="PF04269">
    <property type="entry name" value="DUF440"/>
    <property type="match status" value="1"/>
</dbReference>
<dbReference type="PIRSF" id="PIRSF004916">
    <property type="entry name" value="UCP004916"/>
    <property type="match status" value="1"/>
</dbReference>
<dbReference type="SUPFAM" id="SSF102816">
    <property type="entry name" value="Putative dsDNA mimic"/>
    <property type="match status" value="1"/>
</dbReference>
<sequence length="109" mass="12687">MDMDLNNRLTEDETLEQAYDIFLELAADNLDPADVLLFNLQFEERGGAELFDPAEDWQEHVDFDLNPDFFAEVVIGLADSEDGEINDVFARILLCREKDHKLCHIIWRE</sequence>
<accession>P0A8L7</accession>
<accession>P76028</accession>
<accession>P76830</accession>
<accession>Q8XCC8</accession>
<keyword id="KW-1185">Reference proteome</keyword>
<comment type="function">
    <text evidence="1">May act as a double-stranded DNA (dsDNA) mimic. Probably regulates the activity of a dsDNA-binding protein.</text>
</comment>
<comment type="interaction">
    <interactant intactId="EBI-544511">
        <id>P0A8L7</id>
    </interactant>
    <interactant intactId="EBI-542683">
        <id>P0AFG8</id>
        <label>aceE</label>
    </interactant>
    <organismsDiffer>false</organismsDiffer>
    <experiments>3</experiments>
</comment>
<comment type="similarity">
    <text evidence="1">Belongs to the putative dsDNA mimic protein family.</text>
</comment>
<proteinExistence type="evidence at protein level"/>
<evidence type="ECO:0000255" key="1">
    <source>
        <dbReference type="HAMAP-Rule" id="MF_00680"/>
    </source>
</evidence>
<feature type="chain" id="PRO_0000072775" description="Putative double-stranded DNA mimic protein YciU">
    <location>
        <begin position="1"/>
        <end position="109"/>
    </location>
</feature>
<gene>
    <name evidence="1" type="primary">yciU</name>
    <name type="ordered locus">b1248</name>
    <name type="ordered locus">JW1240</name>
</gene>
<reference key="1">
    <citation type="journal article" date="1996" name="DNA Res.">
        <title>A 570-kb DNA sequence of the Escherichia coli K-12 genome corresponding to the 28.0-40.1 min region on the linkage map.</title>
        <authorList>
            <person name="Aiba H."/>
            <person name="Baba T."/>
            <person name="Fujita K."/>
            <person name="Hayashi K."/>
            <person name="Inada T."/>
            <person name="Isono K."/>
            <person name="Itoh T."/>
            <person name="Kasai H."/>
            <person name="Kashimoto K."/>
            <person name="Kimura S."/>
            <person name="Kitakawa M."/>
            <person name="Kitagawa M."/>
            <person name="Makino K."/>
            <person name="Miki T."/>
            <person name="Mizobuchi K."/>
            <person name="Mori H."/>
            <person name="Mori T."/>
            <person name="Motomura K."/>
            <person name="Nakade S."/>
            <person name="Nakamura Y."/>
            <person name="Nashimoto H."/>
            <person name="Nishio Y."/>
            <person name="Oshima T."/>
            <person name="Saito N."/>
            <person name="Sampei G."/>
            <person name="Seki Y."/>
            <person name="Sivasundaram S."/>
            <person name="Tagami H."/>
            <person name="Takeda J."/>
            <person name="Takemoto K."/>
            <person name="Takeuchi Y."/>
            <person name="Wada C."/>
            <person name="Yamamoto Y."/>
            <person name="Horiuchi T."/>
        </authorList>
    </citation>
    <scope>NUCLEOTIDE SEQUENCE [LARGE SCALE GENOMIC DNA]</scope>
    <source>
        <strain>K12 / W3110 / ATCC 27325 / DSM 5911</strain>
    </source>
</reference>
<reference key="2">
    <citation type="journal article" date="1997" name="Science">
        <title>The complete genome sequence of Escherichia coli K-12.</title>
        <authorList>
            <person name="Blattner F.R."/>
            <person name="Plunkett G. III"/>
            <person name="Bloch C.A."/>
            <person name="Perna N.T."/>
            <person name="Burland V."/>
            <person name="Riley M."/>
            <person name="Collado-Vides J."/>
            <person name="Glasner J.D."/>
            <person name="Rode C.K."/>
            <person name="Mayhew G.F."/>
            <person name="Gregor J."/>
            <person name="Davis N.W."/>
            <person name="Kirkpatrick H.A."/>
            <person name="Goeden M.A."/>
            <person name="Rose D.J."/>
            <person name="Mau B."/>
            <person name="Shao Y."/>
        </authorList>
    </citation>
    <scope>NUCLEOTIDE SEQUENCE [LARGE SCALE GENOMIC DNA]</scope>
    <source>
        <strain>K12 / MG1655 / ATCC 47076</strain>
    </source>
</reference>
<reference key="3">
    <citation type="journal article" date="2006" name="Mol. Syst. Biol.">
        <title>Highly accurate genome sequences of Escherichia coli K-12 strains MG1655 and W3110.</title>
        <authorList>
            <person name="Hayashi K."/>
            <person name="Morooka N."/>
            <person name="Yamamoto Y."/>
            <person name="Fujita K."/>
            <person name="Isono K."/>
            <person name="Choi S."/>
            <person name="Ohtsubo E."/>
            <person name="Baba T."/>
            <person name="Wanner B.L."/>
            <person name="Mori H."/>
            <person name="Horiuchi T."/>
        </authorList>
    </citation>
    <scope>NUCLEOTIDE SEQUENCE [LARGE SCALE GENOMIC DNA]</scope>
    <source>
        <strain>K12 / W3110 / ATCC 27325 / DSM 5911</strain>
    </source>
</reference>